<evidence type="ECO:0000250" key="1"/>
<evidence type="ECO:0000250" key="2">
    <source>
        <dbReference type="UniProtKB" id="Q9UJQ4"/>
    </source>
</evidence>
<evidence type="ECO:0000255" key="3">
    <source>
        <dbReference type="PROSITE-ProRule" id="PRU00042"/>
    </source>
</evidence>
<evidence type="ECO:0000256" key="4">
    <source>
        <dbReference type="SAM" id="MobiDB-lite"/>
    </source>
</evidence>
<evidence type="ECO:0000269" key="5">
    <source>
    </source>
</evidence>
<evidence type="ECO:0000269" key="6">
    <source>
    </source>
</evidence>
<evidence type="ECO:0000269" key="7">
    <source>
    </source>
</evidence>
<evidence type="ECO:0000303" key="8">
    <source>
    </source>
</evidence>
<evidence type="ECO:0000303" key="9">
    <source ref="1"/>
</evidence>
<evidence type="ECO:0000305" key="10"/>
<evidence type="ECO:0007829" key="11">
    <source>
        <dbReference type="PDB" id="8A4I"/>
    </source>
</evidence>
<accession>Q8BX22</accession>
<accession>A2AV00</accession>
<accession>Q6S7E8</accession>
<accession>Q6S7E9</accession>
<accession>Q7TST6</accession>
<feature type="chain" id="PRO_0000261416" description="Sal-like protein 4">
    <location>
        <begin position="1"/>
        <end position="1067"/>
    </location>
</feature>
<feature type="zinc finger region" description="C2H2-type 1; atypical" evidence="3 8">
    <location>
        <begin position="68"/>
        <end position="90"/>
    </location>
</feature>
<feature type="zinc finger region" description="C2H2-type 2" evidence="3">
    <location>
        <begin position="387"/>
        <end position="409"/>
    </location>
</feature>
<feature type="zinc finger region" description="C2H2-type 3" evidence="3">
    <location>
        <begin position="415"/>
        <end position="437"/>
    </location>
</feature>
<feature type="zinc finger region" description="C2H2-type 4" evidence="3">
    <location>
        <begin position="573"/>
        <end position="595"/>
    </location>
</feature>
<feature type="zinc finger region" description="C2H2-type 5" evidence="3">
    <location>
        <begin position="601"/>
        <end position="623"/>
    </location>
</feature>
<feature type="zinc finger region" description="C2H2-type 6" evidence="3">
    <location>
        <begin position="633"/>
        <end position="655"/>
    </location>
</feature>
<feature type="zinc finger region" description="C2H2-type 7" evidence="3">
    <location>
        <begin position="880"/>
        <end position="902"/>
    </location>
</feature>
<feature type="zinc finger region" description="C2H2-type 8" evidence="3">
    <location>
        <begin position="908"/>
        <end position="930"/>
    </location>
</feature>
<feature type="region of interest" description="Disordered" evidence="4">
    <location>
        <begin position="1"/>
        <end position="62"/>
    </location>
</feature>
<feature type="region of interest" description="Disordered" evidence="4">
    <location>
        <begin position="115"/>
        <end position="140"/>
    </location>
</feature>
<feature type="region of interest" description="Disordered" evidence="4">
    <location>
        <begin position="471"/>
        <end position="521"/>
    </location>
</feature>
<feature type="region of interest" description="Disordered" evidence="4">
    <location>
        <begin position="682"/>
        <end position="716"/>
    </location>
</feature>
<feature type="region of interest" description="Disordered" evidence="4">
    <location>
        <begin position="752"/>
        <end position="835"/>
    </location>
</feature>
<feature type="compositionally biased region" description="Low complexity" evidence="4">
    <location>
        <begin position="15"/>
        <end position="42"/>
    </location>
</feature>
<feature type="compositionally biased region" description="Polar residues" evidence="4">
    <location>
        <begin position="119"/>
        <end position="137"/>
    </location>
</feature>
<feature type="compositionally biased region" description="Acidic residues" evidence="4">
    <location>
        <begin position="693"/>
        <end position="704"/>
    </location>
</feature>
<feature type="compositionally biased region" description="Polar residues" evidence="4">
    <location>
        <begin position="707"/>
        <end position="716"/>
    </location>
</feature>
<feature type="compositionally biased region" description="Polar residues" evidence="4">
    <location>
        <begin position="752"/>
        <end position="761"/>
    </location>
</feature>
<feature type="compositionally biased region" description="Polar residues" evidence="4">
    <location>
        <begin position="798"/>
        <end position="809"/>
    </location>
</feature>
<feature type="compositionally biased region" description="Basic and acidic residues" evidence="4">
    <location>
        <begin position="810"/>
        <end position="829"/>
    </location>
</feature>
<feature type="modified residue" description="Phosphoserine" evidence="2">
    <location>
        <position position="53"/>
    </location>
</feature>
<feature type="modified residue" description="Phosphoserine" evidence="2">
    <location>
        <position position="308"/>
    </location>
</feature>
<feature type="modified residue" description="Phosphoserine" evidence="2">
    <location>
        <position position="785"/>
    </location>
</feature>
<feature type="modified residue" description="Phosphoserine" evidence="2">
    <location>
        <position position="798"/>
    </location>
</feature>
<feature type="modified residue" description="Phosphoserine" evidence="2">
    <location>
        <position position="1029"/>
    </location>
</feature>
<feature type="cross-link" description="Glycyl lysine isopeptide (Lys-Gly) (interchain with G-Cter in SUMO1); alternate" evidence="2">
    <location>
        <position position="151"/>
    </location>
</feature>
<feature type="cross-link" description="Glycyl lysine isopeptide (Lys-Gly) (interchain with G-Cter in SUMO2); alternate" evidence="2">
    <location>
        <position position="151"/>
    </location>
</feature>
<feature type="cross-link" description="Glycyl lysine isopeptide (Lys-Gly) (interchain with G-Cter in SUMO2)" evidence="2">
    <location>
        <position position="170"/>
    </location>
</feature>
<feature type="cross-link" description="Glycyl lysine isopeptide (Lys-Gly) (interchain with G-Cter in SUMO2)" evidence="2">
    <location>
        <position position="185"/>
    </location>
</feature>
<feature type="cross-link" description="Glycyl lysine isopeptide (Lys-Gly) (interchain with G-Cter in SUMO2)" evidence="2">
    <location>
        <position position="291"/>
    </location>
</feature>
<feature type="cross-link" description="Glycyl lysine isopeptide (Lys-Gly) (interchain with G-Cter in SUMO1); alternate" evidence="2">
    <location>
        <position position="317"/>
    </location>
</feature>
<feature type="cross-link" description="Glycyl lysine isopeptide (Lys-Gly) (interchain with G-Cter in SUMO2); alternate" evidence="2">
    <location>
        <position position="317"/>
    </location>
</feature>
<feature type="cross-link" description="Glycyl lysine isopeptide (Lys-Gly) (interchain with G-Cter in SUMO2)" evidence="2">
    <location>
        <position position="377"/>
    </location>
</feature>
<feature type="cross-link" description="Glycyl lysine isopeptide (Lys-Gly) (interchain with G-Cter in SUMO1); alternate" evidence="2">
    <location>
        <position position="379"/>
    </location>
</feature>
<feature type="cross-link" description="Glycyl lysine isopeptide (Lys-Gly) (interchain with G-Cter in SUMO2); alternate" evidence="2">
    <location>
        <position position="379"/>
    </location>
</feature>
<feature type="cross-link" description="Glycyl lysine isopeptide (Lys-Gly) (interchain with G-Cter in SUMO2)" evidence="2">
    <location>
        <position position="441"/>
    </location>
</feature>
<feature type="cross-link" description="Glycyl lysine isopeptide (Lys-Gly) (interchain with G-Cter in SUMO2)" evidence="2">
    <location>
        <position position="557"/>
    </location>
</feature>
<feature type="cross-link" description="Glycyl lysine isopeptide (Lys-Gly) (interchain with G-Cter in SUMO2)" evidence="2">
    <location>
        <position position="604"/>
    </location>
</feature>
<feature type="cross-link" description="Glycyl lysine isopeptide (Lys-Gly) (interchain with G-Cter in SUMO2)" evidence="2">
    <location>
        <position position="630"/>
    </location>
</feature>
<feature type="cross-link" description="Glycyl lysine isopeptide (Lys-Gly) (interchain with G-Cter in SUMO1); alternate" evidence="2">
    <location>
        <position position="846"/>
    </location>
</feature>
<feature type="cross-link" description="Glycyl lysine isopeptide (Lys-Gly) (interchain with G-Cter in SUMO2); alternate" evidence="2">
    <location>
        <position position="846"/>
    </location>
</feature>
<feature type="cross-link" description="Glycyl lysine isopeptide (Lys-Gly) (interchain with G-Cter in SUMO2)" evidence="2">
    <location>
        <position position="906"/>
    </location>
</feature>
<feature type="cross-link" description="Glycyl lysine isopeptide (Lys-Gly) (interchain with G-Cter in SUMO2)" evidence="2">
    <location>
        <position position="942"/>
    </location>
</feature>
<feature type="cross-link" description="Glycyl lysine isopeptide (Lys-Gly) (interchain with G-Cter in SUMO2)" evidence="2">
    <location>
        <position position="957"/>
    </location>
</feature>
<feature type="splice variant" id="VSP_021686" description="In isoform 3." evidence="9">
    <location>
        <begin position="40"/>
        <end position="828"/>
    </location>
</feature>
<feature type="splice variant" id="VSP_021687" description="In isoform 2." evidence="9">
    <location>
        <begin position="386"/>
        <end position="829"/>
    </location>
</feature>
<feature type="sequence conflict" description="In Ref. 1; AAR91797." evidence="10" ref="1">
    <original>P</original>
    <variation>H</variation>
    <location>
        <position position="865"/>
    </location>
</feature>
<feature type="sequence conflict" description="In Ref. 1; AAR91797 and 5; CAD32912." evidence="10" ref="1 5">
    <original>A</original>
    <variation>V</variation>
    <location>
        <position position="950"/>
    </location>
</feature>
<feature type="sequence conflict" description="In Ref. 1; AAR91796/AAR91798 and 2; BAC33598." evidence="10" ref="1 2">
    <original>S</original>
    <variation>Y</variation>
    <location>
        <position position="969"/>
    </location>
</feature>
<feature type="sequence conflict" description="In Ref. 1; AAR91797." evidence="10" ref="1">
    <original>I</original>
    <variation>T</variation>
    <location>
        <position position="997"/>
    </location>
</feature>
<feature type="sequence conflict" description="In Ref. 1; AAR91797." evidence="10" ref="1">
    <original>T</original>
    <variation>M</variation>
    <location>
        <position position="1022"/>
    </location>
</feature>
<feature type="strand" evidence="11">
    <location>
        <begin position="883"/>
        <end position="885"/>
    </location>
</feature>
<feature type="strand" evidence="11">
    <location>
        <begin position="889"/>
        <end position="891"/>
    </location>
</feature>
<feature type="helix" evidence="11">
    <location>
        <begin position="892"/>
        <end position="903"/>
    </location>
</feature>
<feature type="strand" evidence="11">
    <location>
        <begin position="911"/>
        <end position="913"/>
    </location>
</feature>
<feature type="strand" evidence="11">
    <location>
        <begin position="916"/>
        <end position="919"/>
    </location>
</feature>
<feature type="helix" evidence="11">
    <location>
        <begin position="920"/>
        <end position="931"/>
    </location>
</feature>
<organism>
    <name type="scientific">Mus musculus</name>
    <name type="common">Mouse</name>
    <dbReference type="NCBI Taxonomy" id="10090"/>
    <lineage>
        <taxon>Eukaryota</taxon>
        <taxon>Metazoa</taxon>
        <taxon>Chordata</taxon>
        <taxon>Craniata</taxon>
        <taxon>Vertebrata</taxon>
        <taxon>Euteleostomi</taxon>
        <taxon>Mammalia</taxon>
        <taxon>Eutheria</taxon>
        <taxon>Euarchontoglires</taxon>
        <taxon>Glires</taxon>
        <taxon>Rodentia</taxon>
        <taxon>Myomorpha</taxon>
        <taxon>Muroidea</taxon>
        <taxon>Muridae</taxon>
        <taxon>Murinae</taxon>
        <taxon>Mus</taxon>
        <taxon>Mus</taxon>
    </lineage>
</organism>
<sequence>MSRRKQAKPQHINWEEGQGEQPQQLPSPDLAEALAAEEPGAPVNSPGNCDEASEDSIPVKRPRREDTHICNKCCAEFFSLSEFMEHKKSCTKTPPVLIMNDSEGPVPSEDFSRAALSHQLGSPSNKDSLQENGSSSGDLKKLGTDSILYLKTEATQPSTPQDISYLPKGKVANTNVTLQALRGTKVAVNQRGAEAPMAPMPAAQGIPWVLEQILCLQQQQLQQIQLTEQIRVQVNMWAAHALHSGVAGADTLKALSSHVSQQVSVSQQVSAAVALLSQKASNPALSLDALKQAKLPHASVPSAASPLSSGLTSFTLKPDGTRVLPNFVSRLPSALLPQTPGSVLLQSPFSAVTLDQSKKGKGKPQNLSASASVLDVKAKDEVVLGKHKCRYCPKVFGTDSSLQIHLRSHTGERPYVCPICGHRFTTKGNLKVHLQRHPEVKANPQLLAEFQDKGAVSAASHYALPVPVPADESSLSVDAEPVPVTGTPSLGLPQKLTSGPNSRDLMGGSLPNDMQPGPSPESEAGLPLLGVGMIHNPPKAGGFQGTGAPESGSETLKLQQLVENIDKATTDPNECLICHRVLSCQSSLKMHYRTHTGERPFQCKICGRAFSTKGNLKTHLGVHRTNTTVKTQHSCPICQKKFTNAVMLQQHIRMHMGGQIPNTPLPESPCDFTAPEPVAVSENGSASGVCQDDAAEGMEAEEVCSQDVPSGPSTVSLPVPSAHLASPSLGFSVLASLDTQGKGALPALALQRQSSRENSSLEGGDTGPANDSSLLVGDQECQSRSPDATETMCYQAVSPANSQAGSVKSRSPEGHKAEGVESCRVDTEGRTSLPPTFIRAQPTFVKVEVPGTFVGPPSMPSGMPPLLASQPQPRRQAKQHCCTRCGKNFSSASALQIHERTHTGEKPFVCNICGRAFTTKGNLKVHYMTHGANNNSARRGRKLAIENPMAALSAEGKRAPEVFSKELLSPAVSVDPASWNQYTSVLNGGLAMKTNEISVIQSGGIPTLPVSLGASSVVSNGTISKLDGSQTGVSMPMSGNGEKLAVPDGMAKHQFPHFLEENKIAVS</sequence>
<dbReference type="EMBL" id="AY463371">
    <property type="protein sequence ID" value="AAR91796.1"/>
    <property type="molecule type" value="mRNA"/>
</dbReference>
<dbReference type="EMBL" id="AY463372">
    <property type="protein sequence ID" value="AAR91797.1"/>
    <property type="molecule type" value="mRNA"/>
</dbReference>
<dbReference type="EMBL" id="AY463373">
    <property type="protein sequence ID" value="AAR91798.1"/>
    <property type="molecule type" value="mRNA"/>
</dbReference>
<dbReference type="EMBL" id="AK049188">
    <property type="protein sequence ID" value="BAC33598.1"/>
    <property type="molecule type" value="mRNA"/>
</dbReference>
<dbReference type="EMBL" id="AL929248">
    <property type="status" value="NOT_ANNOTATED_CDS"/>
    <property type="molecule type" value="Genomic_DNA"/>
</dbReference>
<dbReference type="EMBL" id="CH466551">
    <property type="protein sequence ID" value="EDL06559.1"/>
    <property type="molecule type" value="Genomic_DNA"/>
</dbReference>
<dbReference type="EMBL" id="AJ488904">
    <property type="protein sequence ID" value="CAD32912.1"/>
    <property type="molecule type" value="Genomic_DNA"/>
</dbReference>
<dbReference type="CCDS" id="CCDS17115.1">
    <molecule id="Q8BX22-1"/>
</dbReference>
<dbReference type="CCDS" id="CCDS17116.1">
    <molecule id="Q8BX22-2"/>
</dbReference>
<dbReference type="CCDS" id="CCDS17117.1">
    <molecule id="Q8BX22-3"/>
</dbReference>
<dbReference type="RefSeq" id="NP_780512.2">
    <molecule id="Q8BX22-1"/>
    <property type="nucleotide sequence ID" value="NM_175303.5"/>
</dbReference>
<dbReference type="RefSeq" id="NP_958797.2">
    <molecule id="Q8BX22-2"/>
    <property type="nucleotide sequence ID" value="NM_201395.3"/>
</dbReference>
<dbReference type="RefSeq" id="NP_958798.2">
    <molecule id="Q8BX22-3"/>
    <property type="nucleotide sequence ID" value="NM_201396.3"/>
</dbReference>
<dbReference type="PDB" id="8A4I">
    <property type="method" value="X-ray"/>
    <property type="resolution" value="2.76 A"/>
    <property type="chains" value="I/J/K/L=871-940"/>
</dbReference>
<dbReference type="PDBsum" id="8A4I"/>
<dbReference type="SASBDB" id="Q8BX22"/>
<dbReference type="SMR" id="Q8BX22"/>
<dbReference type="BioGRID" id="221236">
    <property type="interactions" value="72"/>
</dbReference>
<dbReference type="DIP" id="DIP-29926N"/>
<dbReference type="FunCoup" id="Q8BX22">
    <property type="interactions" value="523"/>
</dbReference>
<dbReference type="IntAct" id="Q8BX22">
    <property type="interactions" value="46"/>
</dbReference>
<dbReference type="MINT" id="Q8BX22"/>
<dbReference type="STRING" id="10090.ENSMUSP00000029061"/>
<dbReference type="GlyGen" id="Q8BX22">
    <property type="glycosylation" value="6 sites, 1 O-linked glycan (5 sites)"/>
</dbReference>
<dbReference type="iPTMnet" id="Q8BX22"/>
<dbReference type="PhosphoSitePlus" id="Q8BX22"/>
<dbReference type="PaxDb" id="10090-ENSMUSP00000029061"/>
<dbReference type="PeptideAtlas" id="Q8BX22"/>
<dbReference type="ProteomicsDB" id="256691">
    <molecule id="Q8BX22-1"/>
</dbReference>
<dbReference type="ProteomicsDB" id="256692">
    <molecule id="Q8BX22-2"/>
</dbReference>
<dbReference type="ProteomicsDB" id="256693">
    <molecule id="Q8BX22-3"/>
</dbReference>
<dbReference type="Antibodypedia" id="13868">
    <property type="antibodies" value="350 antibodies from 41 providers"/>
</dbReference>
<dbReference type="DNASU" id="99377"/>
<dbReference type="Ensembl" id="ENSMUST00000029061.12">
    <molecule id="Q8BX22-1"/>
    <property type="protein sequence ID" value="ENSMUSP00000029061.6"/>
    <property type="gene ID" value="ENSMUSG00000027547.18"/>
</dbReference>
<dbReference type="Ensembl" id="ENSMUST00000075044.10">
    <molecule id="Q8BX22-3"/>
    <property type="protein sequence ID" value="ENSMUSP00000074556.4"/>
    <property type="gene ID" value="ENSMUSG00000027547.18"/>
</dbReference>
<dbReference type="Ensembl" id="ENSMUST00000103074.2">
    <molecule id="Q8BX22-2"/>
    <property type="protein sequence ID" value="ENSMUSP00000099363.2"/>
    <property type="gene ID" value="ENSMUSG00000027547.18"/>
</dbReference>
<dbReference type="GeneID" id="99377"/>
<dbReference type="KEGG" id="mmu:99377"/>
<dbReference type="UCSC" id="uc008obf.1">
    <molecule id="Q8BX22-1"/>
    <property type="organism name" value="mouse"/>
</dbReference>
<dbReference type="UCSC" id="uc008obg.1">
    <molecule id="Q8BX22-2"/>
    <property type="organism name" value="mouse"/>
</dbReference>
<dbReference type="UCSC" id="uc008obh.1">
    <molecule id="Q8BX22-3"/>
    <property type="organism name" value="mouse"/>
</dbReference>
<dbReference type="AGR" id="MGI:2139360"/>
<dbReference type="CTD" id="57167"/>
<dbReference type="MGI" id="MGI:2139360">
    <property type="gene designation" value="Sall4"/>
</dbReference>
<dbReference type="VEuPathDB" id="HostDB:ENSMUSG00000027547"/>
<dbReference type="eggNOG" id="KOG1074">
    <property type="taxonomic scope" value="Eukaryota"/>
</dbReference>
<dbReference type="GeneTree" id="ENSGT00940000155384"/>
<dbReference type="HOGENOM" id="CLU_087959_0_0_1"/>
<dbReference type="InParanoid" id="Q8BX22"/>
<dbReference type="OMA" id="SKPQHIN"/>
<dbReference type="OrthoDB" id="8749569at2759"/>
<dbReference type="PhylomeDB" id="Q8BX22"/>
<dbReference type="TreeFam" id="TF317003"/>
<dbReference type="Reactome" id="R-MMU-8943724">
    <property type="pathway name" value="Regulation of PTEN gene transcription"/>
</dbReference>
<dbReference type="BioGRID-ORCS" id="99377">
    <property type="hits" value="4 hits in 62 CRISPR screens"/>
</dbReference>
<dbReference type="PRO" id="PR:Q8BX22"/>
<dbReference type="Proteomes" id="UP000000589">
    <property type="component" value="Chromosome 2"/>
</dbReference>
<dbReference type="RNAct" id="Q8BX22">
    <property type="molecule type" value="protein"/>
</dbReference>
<dbReference type="Bgee" id="ENSMUSG00000027547">
    <property type="expression patterns" value="Expressed in primitive streak and 122 other cell types or tissues"/>
</dbReference>
<dbReference type="ExpressionAtlas" id="Q8BX22">
    <property type="expression patterns" value="baseline and differential"/>
</dbReference>
<dbReference type="GO" id="GO:0005737">
    <property type="term" value="C:cytoplasm"/>
    <property type="evidence" value="ECO:0007669"/>
    <property type="project" value="UniProtKB-SubCell"/>
</dbReference>
<dbReference type="GO" id="GO:0000792">
    <property type="term" value="C:heterochromatin"/>
    <property type="evidence" value="ECO:0000314"/>
    <property type="project" value="MGI"/>
</dbReference>
<dbReference type="GO" id="GO:0005654">
    <property type="term" value="C:nucleoplasm"/>
    <property type="evidence" value="ECO:0007669"/>
    <property type="project" value="Ensembl"/>
</dbReference>
<dbReference type="GO" id="GO:0005634">
    <property type="term" value="C:nucleus"/>
    <property type="evidence" value="ECO:0000314"/>
    <property type="project" value="MGI"/>
</dbReference>
<dbReference type="GO" id="GO:0032991">
    <property type="term" value="C:protein-containing complex"/>
    <property type="evidence" value="ECO:0000314"/>
    <property type="project" value="MGI"/>
</dbReference>
<dbReference type="GO" id="GO:0005667">
    <property type="term" value="C:transcription regulator complex"/>
    <property type="evidence" value="ECO:0000305"/>
    <property type="project" value="MGI"/>
</dbReference>
<dbReference type="GO" id="GO:0003677">
    <property type="term" value="F:DNA binding"/>
    <property type="evidence" value="ECO:0007669"/>
    <property type="project" value="UniProtKB-KW"/>
</dbReference>
<dbReference type="GO" id="GO:0008134">
    <property type="term" value="F:transcription factor binding"/>
    <property type="evidence" value="ECO:0000353"/>
    <property type="project" value="UniProtKB"/>
</dbReference>
<dbReference type="GO" id="GO:0008270">
    <property type="term" value="F:zinc ion binding"/>
    <property type="evidence" value="ECO:0007669"/>
    <property type="project" value="UniProtKB-KW"/>
</dbReference>
<dbReference type="GO" id="GO:0030326">
    <property type="term" value="P:embryonic limb morphogenesis"/>
    <property type="evidence" value="ECO:0000315"/>
    <property type="project" value="MGI"/>
</dbReference>
<dbReference type="GO" id="GO:0007507">
    <property type="term" value="P:heart development"/>
    <property type="evidence" value="ECO:0000315"/>
    <property type="project" value="MGI"/>
</dbReference>
<dbReference type="GO" id="GO:0001701">
    <property type="term" value="P:in utero embryonic development"/>
    <property type="evidence" value="ECO:0000315"/>
    <property type="project" value="MGI"/>
</dbReference>
<dbReference type="GO" id="GO:0001833">
    <property type="term" value="P:inner cell mass cell proliferation"/>
    <property type="evidence" value="ECO:0000315"/>
    <property type="project" value="MGI"/>
</dbReference>
<dbReference type="GO" id="GO:0000122">
    <property type="term" value="P:negative regulation of transcription by RNA polymerase II"/>
    <property type="evidence" value="ECO:0000316"/>
    <property type="project" value="MGI"/>
</dbReference>
<dbReference type="GO" id="GO:0001843">
    <property type="term" value="P:neural tube closure"/>
    <property type="evidence" value="ECO:0000315"/>
    <property type="project" value="MGI"/>
</dbReference>
<dbReference type="GO" id="GO:0021915">
    <property type="term" value="P:neural tube development"/>
    <property type="evidence" value="ECO:0000316"/>
    <property type="project" value="MGI"/>
</dbReference>
<dbReference type="GO" id="GO:0045944">
    <property type="term" value="P:positive regulation of transcription by RNA polymerase II"/>
    <property type="evidence" value="ECO:0000314"/>
    <property type="project" value="MGI"/>
</dbReference>
<dbReference type="GO" id="GO:0035019">
    <property type="term" value="P:somatic stem cell population maintenance"/>
    <property type="evidence" value="ECO:0000315"/>
    <property type="project" value="MGI"/>
</dbReference>
<dbReference type="GO" id="GO:0009888">
    <property type="term" value="P:tissue development"/>
    <property type="evidence" value="ECO:0000315"/>
    <property type="project" value="MGI"/>
</dbReference>
<dbReference type="GO" id="GO:0003281">
    <property type="term" value="P:ventricular septum development"/>
    <property type="evidence" value="ECO:0000315"/>
    <property type="project" value="MGI"/>
</dbReference>
<dbReference type="FunFam" id="3.30.160.60:FF:001874">
    <property type="entry name" value="sal-like protein 4 isoform X2"/>
    <property type="match status" value="1"/>
</dbReference>
<dbReference type="FunFam" id="3.30.160.60:FF:000989">
    <property type="entry name" value="Spalt like transcription factor 4"/>
    <property type="match status" value="1"/>
</dbReference>
<dbReference type="FunFam" id="3.30.160.60:FF:001241">
    <property type="entry name" value="Spalt like transcription factor 4"/>
    <property type="match status" value="1"/>
</dbReference>
<dbReference type="FunFam" id="3.30.160.60:FF:000025">
    <property type="entry name" value="Spalt-like transcription factor 1"/>
    <property type="match status" value="1"/>
</dbReference>
<dbReference type="FunFam" id="3.30.160.60:FF:000130">
    <property type="entry name" value="Spalt-like transcription factor 4"/>
    <property type="match status" value="1"/>
</dbReference>
<dbReference type="FunFam" id="3.30.160.60:FF:001465">
    <property type="entry name" value="Zinc finger protein 560"/>
    <property type="match status" value="1"/>
</dbReference>
<dbReference type="Gene3D" id="3.30.160.60">
    <property type="entry name" value="Classic Zinc Finger"/>
    <property type="match status" value="6"/>
</dbReference>
<dbReference type="InterPro" id="IPR051565">
    <property type="entry name" value="Sal_C2H2-zinc-finger"/>
</dbReference>
<dbReference type="InterPro" id="IPR036236">
    <property type="entry name" value="Znf_C2H2_sf"/>
</dbReference>
<dbReference type="InterPro" id="IPR013087">
    <property type="entry name" value="Znf_C2H2_type"/>
</dbReference>
<dbReference type="PANTHER" id="PTHR23233">
    <property type="entry name" value="SAL-LIKE PROTEIN"/>
    <property type="match status" value="1"/>
</dbReference>
<dbReference type="PANTHER" id="PTHR23233:SF19">
    <property type="entry name" value="SAL-LIKE PROTEIN 4"/>
    <property type="match status" value="1"/>
</dbReference>
<dbReference type="Pfam" id="PF00096">
    <property type="entry name" value="zf-C2H2"/>
    <property type="match status" value="6"/>
</dbReference>
<dbReference type="SMART" id="SM00355">
    <property type="entry name" value="ZnF_C2H2"/>
    <property type="match status" value="8"/>
</dbReference>
<dbReference type="SUPFAM" id="SSF57667">
    <property type="entry name" value="beta-beta-alpha zinc fingers"/>
    <property type="match status" value="4"/>
</dbReference>
<dbReference type="PROSITE" id="PS00028">
    <property type="entry name" value="ZINC_FINGER_C2H2_1"/>
    <property type="match status" value="7"/>
</dbReference>
<dbReference type="PROSITE" id="PS50157">
    <property type="entry name" value="ZINC_FINGER_C2H2_2"/>
    <property type="match status" value="7"/>
</dbReference>
<name>SALL4_MOUSE</name>
<gene>
    <name type="primary">Sall4</name>
</gene>
<comment type="function">
    <text evidence="1">Transcription factor with a key role in the maintenance and self-renewal of embryonic and hematopoietic stem cells.</text>
</comment>
<comment type="subunit">
    <text evidence="2 5 6 7">Interacts with POU5F1/OCT4 (By similarity). Interacts with NANOG (PubMed:16840789). Interacts with BEND3 (By similarity). Interacts with NSD2 (via PHD-type zinc fingers 1, 2 and 3) (PubMed:19483677). Interacts with NRBP1 (PubMed:22510880).</text>
</comment>
<comment type="interaction">
    <interactant intactId="EBI-2312582">
        <id>Q8BX22</id>
    </interactant>
    <interactant intactId="EBI-904134">
        <id>Q9R190</id>
        <label>Mta2</label>
    </interactant>
    <organismsDiffer>false</organismsDiffer>
    <experiments>3</experiments>
</comment>
<comment type="interaction">
    <interactant intactId="EBI-2312582">
        <id>Q8BX22</id>
    </interactant>
    <interactant intactId="EBI-5691985">
        <id>Q7TSZ8</id>
        <label>Nacc1</label>
    </interactant>
    <organismsDiffer>false</organismsDiffer>
    <experiments>4</experiments>
</comment>
<comment type="interaction">
    <interactant intactId="EBI-2312582">
        <id>Q8BX22</id>
    </interactant>
    <interactant intactId="EBI-11518042">
        <id>Q8BVE8-2</id>
        <label>Nsd2</label>
    </interactant>
    <organismsDiffer>false</organismsDiffer>
    <experiments>3</experiments>
</comment>
<comment type="interaction">
    <interactant intactId="EBI-2312582">
        <id>Q8BX22</id>
    </interactant>
    <interactant intactId="EBI-5691478">
        <id>O70230</id>
        <label>Znf143</label>
    </interactant>
    <organismsDiffer>false</organismsDiffer>
    <experiments>2</experiments>
</comment>
<comment type="interaction">
    <interactant intactId="EBI-2312582">
        <id>Q8BX22</id>
    </interactant>
    <interactant intactId="EBI-749731">
        <id>Q9UHY1</id>
        <label>NRBP1</label>
    </interactant>
    <organismsDiffer>true</organismsDiffer>
    <experiments>2</experiments>
</comment>
<comment type="subcellular location">
    <subcellularLocation>
        <location evidence="1">Cytoplasm</location>
    </subcellularLocation>
    <subcellularLocation>
        <location evidence="6">Nucleus</location>
    </subcellularLocation>
</comment>
<comment type="alternative products">
    <event type="alternative splicing"/>
    <isoform>
        <id>Q8BX22-1</id>
        <name>1</name>
        <name>Sall4a</name>
        <sequence type="displayed"/>
    </isoform>
    <isoform>
        <id>Q8BX22-2</id>
        <name>2</name>
        <name>Sall4b</name>
        <sequence type="described" ref="VSP_021687"/>
    </isoform>
    <isoform>
        <id>Q8BX22-3</id>
        <name>3</name>
        <name>Sall4c</name>
        <sequence type="described" ref="VSP_021686"/>
    </isoform>
</comment>
<comment type="developmental stage">
    <text evidence="6">Expressed in the embryonic heart (at protein level).</text>
</comment>
<comment type="PTM">
    <text evidence="1">Sumoylation with both SUMO1 and SUMO2 regulates the stability, subcellular localization, transcriptional activity, and may reduce interaction with POU5F1/OCT4.</text>
</comment>
<comment type="similarity">
    <text evidence="10">Belongs to the sal C2H2-type zinc-finger protein family.</text>
</comment>
<proteinExistence type="evidence at protein level"/>
<protein>
    <recommendedName>
        <fullName>Sal-like protein 4</fullName>
    </recommendedName>
    <alternativeName>
        <fullName>Zinc finger protein SALL4</fullName>
    </alternativeName>
</protein>
<reference key="1">
    <citation type="submission" date="2003-11" db="EMBL/GenBank/DDBJ databases">
        <title>Characterization of the murine Okihiro syndrome gene (Sall4): sequence, expression and alternative splicing.</title>
        <authorList>
            <person name="Ma Y."/>
            <person name="Di C."/>
            <person name="Kang Q."/>
            <person name="Lai R."/>
            <person name="Theus J."/>
            <person name="Chai L."/>
        </authorList>
    </citation>
    <scope>NUCLEOTIDE SEQUENCE [MRNA] (ISOFORMS 1; 2 AND 3)</scope>
</reference>
<reference key="2">
    <citation type="journal article" date="2005" name="Science">
        <title>The transcriptional landscape of the mammalian genome.</title>
        <authorList>
            <person name="Carninci P."/>
            <person name="Kasukawa T."/>
            <person name="Katayama S."/>
            <person name="Gough J."/>
            <person name="Frith M.C."/>
            <person name="Maeda N."/>
            <person name="Oyama R."/>
            <person name="Ravasi T."/>
            <person name="Lenhard B."/>
            <person name="Wells C."/>
            <person name="Kodzius R."/>
            <person name="Shimokawa K."/>
            <person name="Bajic V.B."/>
            <person name="Brenner S.E."/>
            <person name="Batalov S."/>
            <person name="Forrest A.R."/>
            <person name="Zavolan M."/>
            <person name="Davis M.J."/>
            <person name="Wilming L.G."/>
            <person name="Aidinis V."/>
            <person name="Allen J.E."/>
            <person name="Ambesi-Impiombato A."/>
            <person name="Apweiler R."/>
            <person name="Aturaliya R.N."/>
            <person name="Bailey T.L."/>
            <person name="Bansal M."/>
            <person name="Baxter L."/>
            <person name="Beisel K.W."/>
            <person name="Bersano T."/>
            <person name="Bono H."/>
            <person name="Chalk A.M."/>
            <person name="Chiu K.P."/>
            <person name="Choudhary V."/>
            <person name="Christoffels A."/>
            <person name="Clutterbuck D.R."/>
            <person name="Crowe M.L."/>
            <person name="Dalla E."/>
            <person name="Dalrymple B.P."/>
            <person name="de Bono B."/>
            <person name="Della Gatta G."/>
            <person name="di Bernardo D."/>
            <person name="Down T."/>
            <person name="Engstrom P."/>
            <person name="Fagiolini M."/>
            <person name="Faulkner G."/>
            <person name="Fletcher C.F."/>
            <person name="Fukushima T."/>
            <person name="Furuno M."/>
            <person name="Futaki S."/>
            <person name="Gariboldi M."/>
            <person name="Georgii-Hemming P."/>
            <person name="Gingeras T.R."/>
            <person name="Gojobori T."/>
            <person name="Green R.E."/>
            <person name="Gustincich S."/>
            <person name="Harbers M."/>
            <person name="Hayashi Y."/>
            <person name="Hensch T.K."/>
            <person name="Hirokawa N."/>
            <person name="Hill D."/>
            <person name="Huminiecki L."/>
            <person name="Iacono M."/>
            <person name="Ikeo K."/>
            <person name="Iwama A."/>
            <person name="Ishikawa T."/>
            <person name="Jakt M."/>
            <person name="Kanapin A."/>
            <person name="Katoh M."/>
            <person name="Kawasawa Y."/>
            <person name="Kelso J."/>
            <person name="Kitamura H."/>
            <person name="Kitano H."/>
            <person name="Kollias G."/>
            <person name="Krishnan S.P."/>
            <person name="Kruger A."/>
            <person name="Kummerfeld S.K."/>
            <person name="Kurochkin I.V."/>
            <person name="Lareau L.F."/>
            <person name="Lazarevic D."/>
            <person name="Lipovich L."/>
            <person name="Liu J."/>
            <person name="Liuni S."/>
            <person name="McWilliam S."/>
            <person name="Madan Babu M."/>
            <person name="Madera M."/>
            <person name="Marchionni L."/>
            <person name="Matsuda H."/>
            <person name="Matsuzawa S."/>
            <person name="Miki H."/>
            <person name="Mignone F."/>
            <person name="Miyake S."/>
            <person name="Morris K."/>
            <person name="Mottagui-Tabar S."/>
            <person name="Mulder N."/>
            <person name="Nakano N."/>
            <person name="Nakauchi H."/>
            <person name="Ng P."/>
            <person name="Nilsson R."/>
            <person name="Nishiguchi S."/>
            <person name="Nishikawa S."/>
            <person name="Nori F."/>
            <person name="Ohara O."/>
            <person name="Okazaki Y."/>
            <person name="Orlando V."/>
            <person name="Pang K.C."/>
            <person name="Pavan W.J."/>
            <person name="Pavesi G."/>
            <person name="Pesole G."/>
            <person name="Petrovsky N."/>
            <person name="Piazza S."/>
            <person name="Reed J."/>
            <person name="Reid J.F."/>
            <person name="Ring B.Z."/>
            <person name="Ringwald M."/>
            <person name="Rost B."/>
            <person name="Ruan Y."/>
            <person name="Salzberg S.L."/>
            <person name="Sandelin A."/>
            <person name="Schneider C."/>
            <person name="Schoenbach C."/>
            <person name="Sekiguchi K."/>
            <person name="Semple C.A."/>
            <person name="Seno S."/>
            <person name="Sessa L."/>
            <person name="Sheng Y."/>
            <person name="Shibata Y."/>
            <person name="Shimada H."/>
            <person name="Shimada K."/>
            <person name="Silva D."/>
            <person name="Sinclair B."/>
            <person name="Sperling S."/>
            <person name="Stupka E."/>
            <person name="Sugiura K."/>
            <person name="Sultana R."/>
            <person name="Takenaka Y."/>
            <person name="Taki K."/>
            <person name="Tammoja K."/>
            <person name="Tan S.L."/>
            <person name="Tang S."/>
            <person name="Taylor M.S."/>
            <person name="Tegner J."/>
            <person name="Teichmann S.A."/>
            <person name="Ueda H.R."/>
            <person name="van Nimwegen E."/>
            <person name="Verardo R."/>
            <person name="Wei C.L."/>
            <person name="Yagi K."/>
            <person name="Yamanishi H."/>
            <person name="Zabarovsky E."/>
            <person name="Zhu S."/>
            <person name="Zimmer A."/>
            <person name="Hide W."/>
            <person name="Bult C."/>
            <person name="Grimmond S.M."/>
            <person name="Teasdale R.D."/>
            <person name="Liu E.T."/>
            <person name="Brusic V."/>
            <person name="Quackenbush J."/>
            <person name="Wahlestedt C."/>
            <person name="Mattick J.S."/>
            <person name="Hume D.A."/>
            <person name="Kai C."/>
            <person name="Sasaki D."/>
            <person name="Tomaru Y."/>
            <person name="Fukuda S."/>
            <person name="Kanamori-Katayama M."/>
            <person name="Suzuki M."/>
            <person name="Aoki J."/>
            <person name="Arakawa T."/>
            <person name="Iida J."/>
            <person name="Imamura K."/>
            <person name="Itoh M."/>
            <person name="Kato T."/>
            <person name="Kawaji H."/>
            <person name="Kawagashira N."/>
            <person name="Kawashima T."/>
            <person name="Kojima M."/>
            <person name="Kondo S."/>
            <person name="Konno H."/>
            <person name="Nakano K."/>
            <person name="Ninomiya N."/>
            <person name="Nishio T."/>
            <person name="Okada M."/>
            <person name="Plessy C."/>
            <person name="Shibata K."/>
            <person name="Shiraki T."/>
            <person name="Suzuki S."/>
            <person name="Tagami M."/>
            <person name="Waki K."/>
            <person name="Watahiki A."/>
            <person name="Okamura-Oho Y."/>
            <person name="Suzuki H."/>
            <person name="Kawai J."/>
            <person name="Hayashizaki Y."/>
        </authorList>
    </citation>
    <scope>NUCLEOTIDE SEQUENCE [LARGE SCALE MRNA] (ISOFORM 1)</scope>
    <source>
        <strain>C57BL/6J</strain>
    </source>
</reference>
<reference key="3">
    <citation type="journal article" date="2009" name="PLoS Biol.">
        <title>Lineage-specific biology revealed by a finished genome assembly of the mouse.</title>
        <authorList>
            <person name="Church D.M."/>
            <person name="Goodstadt L."/>
            <person name="Hillier L.W."/>
            <person name="Zody M.C."/>
            <person name="Goldstein S."/>
            <person name="She X."/>
            <person name="Bult C.J."/>
            <person name="Agarwala R."/>
            <person name="Cherry J.L."/>
            <person name="DiCuccio M."/>
            <person name="Hlavina W."/>
            <person name="Kapustin Y."/>
            <person name="Meric P."/>
            <person name="Maglott D."/>
            <person name="Birtle Z."/>
            <person name="Marques A.C."/>
            <person name="Graves T."/>
            <person name="Zhou S."/>
            <person name="Teague B."/>
            <person name="Potamousis K."/>
            <person name="Churas C."/>
            <person name="Place M."/>
            <person name="Herschleb J."/>
            <person name="Runnheim R."/>
            <person name="Forrest D."/>
            <person name="Amos-Landgraf J."/>
            <person name="Schwartz D.C."/>
            <person name="Cheng Z."/>
            <person name="Lindblad-Toh K."/>
            <person name="Eichler E.E."/>
            <person name="Ponting C.P."/>
        </authorList>
    </citation>
    <scope>NUCLEOTIDE SEQUENCE [LARGE SCALE GENOMIC DNA]</scope>
    <source>
        <strain>C57BL/6J</strain>
    </source>
</reference>
<reference key="4">
    <citation type="submission" date="2005-07" db="EMBL/GenBank/DDBJ databases">
        <authorList>
            <person name="Mural R.J."/>
            <person name="Adams M.D."/>
            <person name="Myers E.W."/>
            <person name="Smith H.O."/>
            <person name="Venter J.C."/>
        </authorList>
    </citation>
    <scope>NUCLEOTIDE SEQUENCE [LARGE SCALE GENOMIC DNA]</scope>
</reference>
<reference key="5">
    <citation type="submission" date="2002-05" db="EMBL/GenBank/DDBJ databases">
        <title>Cloning and expression of Sall4.</title>
        <authorList>
            <person name="Kohlhase J."/>
            <person name="Kispert A."/>
            <person name="Heinrich M."/>
        </authorList>
    </citation>
    <scope>NUCLEOTIDE SEQUENCE [GENOMIC DNA] OF 324-958</scope>
    <source>
        <strain>129/Sv</strain>
    </source>
</reference>
<reference key="6">
    <citation type="journal article" date="2006" name="J. Biol. Chem.">
        <title>Sall4 interacts with Nanog and co-occupies Nanog genomic sites in embryonic stem cells.</title>
        <authorList>
            <person name="Wu Q."/>
            <person name="Chen X."/>
            <person name="Zhang J."/>
            <person name="Loh Y.-H."/>
            <person name="Low T.-Y."/>
            <person name="Zhang W."/>
            <person name="Zhang W."/>
            <person name="Sze S.-K."/>
            <person name="Lim B."/>
            <person name="Ng H.-H."/>
        </authorList>
    </citation>
    <scope>INTERACTION WITH NANOG</scope>
</reference>
<reference key="7">
    <citation type="journal article" date="2006" name="Dev. Biol.">
        <title>The vertebrate spalt genes in development and disease.</title>
        <authorList>
            <person name="Sweetman D."/>
            <person name="Muensterberg A."/>
        </authorList>
    </citation>
    <scope>DOMAIN</scope>
</reference>
<reference key="8">
    <citation type="journal article" date="2009" name="Nature">
        <title>A histone H3 lysine 36 trimethyltransferase links Nkx2-5 to Wolf-Hirschhorn syndrome.</title>
        <authorList>
            <person name="Nimura K."/>
            <person name="Ura K."/>
            <person name="Shiratori H."/>
            <person name="Ikawa M."/>
            <person name="Okabe M."/>
            <person name="Schwartz R.J."/>
            <person name="Kaneda Y."/>
        </authorList>
    </citation>
    <scope>INTERACTION WITH NSD2</scope>
    <scope>SUBCELLULAR LOCATION</scope>
    <scope>DEVELOPMENTAL STAGE</scope>
</reference>
<reference key="9">
    <citation type="journal article" date="2012" name="EMBO J.">
        <title>Nuclear receptor binding protein 1 regulates intestinal progenitor cell homeostasis and tumour formation.</title>
        <authorList>
            <person name="Wilson C.H."/>
            <person name="Crombie C."/>
            <person name="van der Weyden L."/>
            <person name="Poulogiannis G."/>
            <person name="Rust A.G."/>
            <person name="Pardo M."/>
            <person name="Gracia T."/>
            <person name="Yu L."/>
            <person name="Choudhary J."/>
            <person name="Poulin G.B."/>
            <person name="McIntyre R.E."/>
            <person name="Winton D.J."/>
            <person name="March H.N."/>
            <person name="Arends M.J."/>
            <person name="Fraser A.G."/>
            <person name="Adams D.J."/>
        </authorList>
    </citation>
    <scope>INTERACTION WITH NRBP1</scope>
</reference>
<keyword id="KW-0002">3D-structure</keyword>
<keyword id="KW-0025">Alternative splicing</keyword>
<keyword id="KW-0963">Cytoplasm</keyword>
<keyword id="KW-0238">DNA-binding</keyword>
<keyword id="KW-1017">Isopeptide bond</keyword>
<keyword id="KW-0479">Metal-binding</keyword>
<keyword id="KW-0539">Nucleus</keyword>
<keyword id="KW-0553">Oncogene</keyword>
<keyword id="KW-0597">Phosphoprotein</keyword>
<keyword id="KW-1185">Reference proteome</keyword>
<keyword id="KW-0677">Repeat</keyword>
<keyword id="KW-0804">Transcription</keyword>
<keyword id="KW-0805">Transcription regulation</keyword>
<keyword id="KW-0832">Ubl conjugation</keyword>
<keyword id="KW-0862">Zinc</keyword>
<keyword id="KW-0863">Zinc-finger</keyword>